<reference key="1">
    <citation type="journal article" date="1993" name="J. Mol. Biol.">
        <title>Molecular cloning and expression of the transformation sensitive epithelial marker stratifin. A member of a protein family that has been involved in the protein kinase C signalling pathway.</title>
        <authorList>
            <person name="Leffers H."/>
            <person name="Madsen P."/>
            <person name="Rasmussen H.H."/>
            <person name="Honore B."/>
            <person name="Andersen A.H."/>
            <person name="Walbum E."/>
            <person name="Vandekerckhove J."/>
            <person name="Celis J.E."/>
        </authorList>
    </citation>
    <scope>NUCLEOTIDE SEQUENCE [MRNA]</scope>
    <source>
        <tissue>Keratinocyte</tissue>
    </source>
</reference>
<reference key="2">
    <citation type="journal article" date="2004" name="Nat. Genet.">
        <title>Complete sequencing and characterization of 21,243 full-length human cDNAs.</title>
        <authorList>
            <person name="Ota T."/>
            <person name="Suzuki Y."/>
            <person name="Nishikawa T."/>
            <person name="Otsuki T."/>
            <person name="Sugiyama T."/>
            <person name="Irie R."/>
            <person name="Wakamatsu A."/>
            <person name="Hayashi K."/>
            <person name="Sato H."/>
            <person name="Nagai K."/>
            <person name="Kimura K."/>
            <person name="Makita H."/>
            <person name="Sekine M."/>
            <person name="Obayashi M."/>
            <person name="Nishi T."/>
            <person name="Shibahara T."/>
            <person name="Tanaka T."/>
            <person name="Ishii S."/>
            <person name="Yamamoto J."/>
            <person name="Saito K."/>
            <person name="Kawai Y."/>
            <person name="Isono Y."/>
            <person name="Nakamura Y."/>
            <person name="Nagahari K."/>
            <person name="Murakami K."/>
            <person name="Yasuda T."/>
            <person name="Iwayanagi T."/>
            <person name="Wagatsuma M."/>
            <person name="Shiratori A."/>
            <person name="Sudo H."/>
            <person name="Hosoiri T."/>
            <person name="Kaku Y."/>
            <person name="Kodaira H."/>
            <person name="Kondo H."/>
            <person name="Sugawara M."/>
            <person name="Takahashi M."/>
            <person name="Kanda K."/>
            <person name="Yokoi T."/>
            <person name="Furuya T."/>
            <person name="Kikkawa E."/>
            <person name="Omura Y."/>
            <person name="Abe K."/>
            <person name="Kamihara K."/>
            <person name="Katsuta N."/>
            <person name="Sato K."/>
            <person name="Tanikawa M."/>
            <person name="Yamazaki M."/>
            <person name="Ninomiya K."/>
            <person name="Ishibashi T."/>
            <person name="Yamashita H."/>
            <person name="Murakawa K."/>
            <person name="Fujimori K."/>
            <person name="Tanai H."/>
            <person name="Kimata M."/>
            <person name="Watanabe M."/>
            <person name="Hiraoka S."/>
            <person name="Chiba Y."/>
            <person name="Ishida S."/>
            <person name="Ono Y."/>
            <person name="Takiguchi S."/>
            <person name="Watanabe S."/>
            <person name="Yosida M."/>
            <person name="Hotuta T."/>
            <person name="Kusano J."/>
            <person name="Kanehori K."/>
            <person name="Takahashi-Fujii A."/>
            <person name="Hara H."/>
            <person name="Tanase T.-O."/>
            <person name="Nomura Y."/>
            <person name="Togiya S."/>
            <person name="Komai F."/>
            <person name="Hara R."/>
            <person name="Takeuchi K."/>
            <person name="Arita M."/>
            <person name="Imose N."/>
            <person name="Musashino K."/>
            <person name="Yuuki H."/>
            <person name="Oshima A."/>
            <person name="Sasaki N."/>
            <person name="Aotsuka S."/>
            <person name="Yoshikawa Y."/>
            <person name="Matsunawa H."/>
            <person name="Ichihara T."/>
            <person name="Shiohata N."/>
            <person name="Sano S."/>
            <person name="Moriya S."/>
            <person name="Momiyama H."/>
            <person name="Satoh N."/>
            <person name="Takami S."/>
            <person name="Terashima Y."/>
            <person name="Suzuki O."/>
            <person name="Nakagawa S."/>
            <person name="Senoh A."/>
            <person name="Mizoguchi H."/>
            <person name="Goto Y."/>
            <person name="Shimizu F."/>
            <person name="Wakebe H."/>
            <person name="Hishigaki H."/>
            <person name="Watanabe T."/>
            <person name="Sugiyama A."/>
            <person name="Takemoto M."/>
            <person name="Kawakami B."/>
            <person name="Yamazaki M."/>
            <person name="Watanabe K."/>
            <person name="Kumagai A."/>
            <person name="Itakura S."/>
            <person name="Fukuzumi Y."/>
            <person name="Fujimori Y."/>
            <person name="Komiyama M."/>
            <person name="Tashiro H."/>
            <person name="Tanigami A."/>
            <person name="Fujiwara T."/>
            <person name="Ono T."/>
            <person name="Yamada K."/>
            <person name="Fujii Y."/>
            <person name="Ozaki K."/>
            <person name="Hirao M."/>
            <person name="Ohmori Y."/>
            <person name="Kawabata A."/>
            <person name="Hikiji T."/>
            <person name="Kobatake N."/>
            <person name="Inagaki H."/>
            <person name="Ikema Y."/>
            <person name="Okamoto S."/>
            <person name="Okitani R."/>
            <person name="Kawakami T."/>
            <person name="Noguchi S."/>
            <person name="Itoh T."/>
            <person name="Shigeta K."/>
            <person name="Senba T."/>
            <person name="Matsumura K."/>
            <person name="Nakajima Y."/>
            <person name="Mizuno T."/>
            <person name="Morinaga M."/>
            <person name="Sasaki M."/>
            <person name="Togashi T."/>
            <person name="Oyama M."/>
            <person name="Hata H."/>
            <person name="Watanabe M."/>
            <person name="Komatsu T."/>
            <person name="Mizushima-Sugano J."/>
            <person name="Satoh T."/>
            <person name="Shirai Y."/>
            <person name="Takahashi Y."/>
            <person name="Nakagawa K."/>
            <person name="Okumura K."/>
            <person name="Nagase T."/>
            <person name="Nomura N."/>
            <person name="Kikuchi H."/>
            <person name="Masuho Y."/>
            <person name="Yamashita R."/>
            <person name="Nakai K."/>
            <person name="Yada T."/>
            <person name="Nakamura Y."/>
            <person name="Ohara O."/>
            <person name="Isogai T."/>
            <person name="Sugano S."/>
        </authorList>
    </citation>
    <scope>NUCLEOTIDE SEQUENCE [LARGE SCALE MRNA] (ISOFORM LONG)</scope>
    <source>
        <tissue>Thymus</tissue>
    </source>
</reference>
<reference key="3">
    <citation type="journal article" date="2001" name="Nature">
        <title>The DNA sequence and comparative analysis of human chromosome 20.</title>
        <authorList>
            <person name="Deloukas P."/>
            <person name="Matthews L.H."/>
            <person name="Ashurst J.L."/>
            <person name="Burton J."/>
            <person name="Gilbert J.G.R."/>
            <person name="Jones M."/>
            <person name="Stavrides G."/>
            <person name="Almeida J.P."/>
            <person name="Babbage A.K."/>
            <person name="Bagguley C.L."/>
            <person name="Bailey J."/>
            <person name="Barlow K.F."/>
            <person name="Bates K.N."/>
            <person name="Beard L.M."/>
            <person name="Beare D.M."/>
            <person name="Beasley O.P."/>
            <person name="Bird C.P."/>
            <person name="Blakey S.E."/>
            <person name="Bridgeman A.M."/>
            <person name="Brown A.J."/>
            <person name="Buck D."/>
            <person name="Burrill W.D."/>
            <person name="Butler A.P."/>
            <person name="Carder C."/>
            <person name="Carter N.P."/>
            <person name="Chapman J.C."/>
            <person name="Clamp M."/>
            <person name="Clark G."/>
            <person name="Clark L.N."/>
            <person name="Clark S.Y."/>
            <person name="Clee C.M."/>
            <person name="Clegg S."/>
            <person name="Cobley V.E."/>
            <person name="Collier R.E."/>
            <person name="Connor R.E."/>
            <person name="Corby N.R."/>
            <person name="Coulson A."/>
            <person name="Coville G.J."/>
            <person name="Deadman R."/>
            <person name="Dhami P.D."/>
            <person name="Dunn M."/>
            <person name="Ellington A.G."/>
            <person name="Frankland J.A."/>
            <person name="Fraser A."/>
            <person name="French L."/>
            <person name="Garner P."/>
            <person name="Grafham D.V."/>
            <person name="Griffiths C."/>
            <person name="Griffiths M.N.D."/>
            <person name="Gwilliam R."/>
            <person name="Hall R.E."/>
            <person name="Hammond S."/>
            <person name="Harley J.L."/>
            <person name="Heath P.D."/>
            <person name="Ho S."/>
            <person name="Holden J.L."/>
            <person name="Howden P.J."/>
            <person name="Huckle E."/>
            <person name="Hunt A.R."/>
            <person name="Hunt S.E."/>
            <person name="Jekosch K."/>
            <person name="Johnson C.M."/>
            <person name="Johnson D."/>
            <person name="Kay M.P."/>
            <person name="Kimberley A.M."/>
            <person name="King A."/>
            <person name="Knights A."/>
            <person name="Laird G.K."/>
            <person name="Lawlor S."/>
            <person name="Lehvaeslaiho M.H."/>
            <person name="Leversha M.A."/>
            <person name="Lloyd C."/>
            <person name="Lloyd D.M."/>
            <person name="Lovell J.D."/>
            <person name="Marsh V.L."/>
            <person name="Martin S.L."/>
            <person name="McConnachie L.J."/>
            <person name="McLay K."/>
            <person name="McMurray A.A."/>
            <person name="Milne S.A."/>
            <person name="Mistry D."/>
            <person name="Moore M.J.F."/>
            <person name="Mullikin J.C."/>
            <person name="Nickerson T."/>
            <person name="Oliver K."/>
            <person name="Parker A."/>
            <person name="Patel R."/>
            <person name="Pearce T.A.V."/>
            <person name="Peck A.I."/>
            <person name="Phillimore B.J.C.T."/>
            <person name="Prathalingam S.R."/>
            <person name="Plumb R.W."/>
            <person name="Ramsay H."/>
            <person name="Rice C.M."/>
            <person name="Ross M.T."/>
            <person name="Scott C.E."/>
            <person name="Sehra H.K."/>
            <person name="Shownkeen R."/>
            <person name="Sims S."/>
            <person name="Skuce C.D."/>
            <person name="Smith M.L."/>
            <person name="Soderlund C."/>
            <person name="Steward C.A."/>
            <person name="Sulston J.E."/>
            <person name="Swann R.M."/>
            <person name="Sycamore N."/>
            <person name="Taylor R."/>
            <person name="Tee L."/>
            <person name="Thomas D.W."/>
            <person name="Thorpe A."/>
            <person name="Tracey A."/>
            <person name="Tromans A.C."/>
            <person name="Vaudin M."/>
            <person name="Wall M."/>
            <person name="Wallis J.M."/>
            <person name="Whitehead S.L."/>
            <person name="Whittaker P."/>
            <person name="Willey D.L."/>
            <person name="Williams L."/>
            <person name="Williams S.A."/>
            <person name="Wilming L."/>
            <person name="Wray P.W."/>
            <person name="Hubbard T."/>
            <person name="Durbin R.M."/>
            <person name="Bentley D.R."/>
            <person name="Beck S."/>
            <person name="Rogers J."/>
        </authorList>
    </citation>
    <scope>NUCLEOTIDE SEQUENCE [LARGE SCALE GENOMIC DNA]</scope>
</reference>
<reference key="4">
    <citation type="submission" date="2005-09" db="EMBL/GenBank/DDBJ databases">
        <authorList>
            <person name="Mural R.J."/>
            <person name="Istrail S."/>
            <person name="Sutton G.G."/>
            <person name="Florea L."/>
            <person name="Halpern A.L."/>
            <person name="Mobarry C.M."/>
            <person name="Lippert R."/>
            <person name="Walenz B."/>
            <person name="Shatkay H."/>
            <person name="Dew I."/>
            <person name="Miller J.R."/>
            <person name="Flanigan M.J."/>
            <person name="Edwards N.J."/>
            <person name="Bolanos R."/>
            <person name="Fasulo D."/>
            <person name="Halldorsson B.V."/>
            <person name="Hannenhalli S."/>
            <person name="Turner R."/>
            <person name="Yooseph S."/>
            <person name="Lu F."/>
            <person name="Nusskern D.R."/>
            <person name="Shue B.C."/>
            <person name="Zheng X.H."/>
            <person name="Zhong F."/>
            <person name="Delcher A.L."/>
            <person name="Huson D.H."/>
            <person name="Kravitz S.A."/>
            <person name="Mouchard L."/>
            <person name="Reinert K."/>
            <person name="Remington K.A."/>
            <person name="Clark A.G."/>
            <person name="Waterman M.S."/>
            <person name="Eichler E.E."/>
            <person name="Adams M.D."/>
            <person name="Hunkapiller M.W."/>
            <person name="Myers E.W."/>
            <person name="Venter J.C."/>
        </authorList>
    </citation>
    <scope>NUCLEOTIDE SEQUENCE [LARGE SCALE GENOMIC DNA]</scope>
</reference>
<reference key="5">
    <citation type="journal article" date="2004" name="Genome Res.">
        <title>The status, quality, and expansion of the NIH full-length cDNA project: the Mammalian Gene Collection (MGC).</title>
        <authorList>
            <consortium name="The MGC Project Team"/>
        </authorList>
    </citation>
    <scope>NUCLEOTIDE SEQUENCE [LARGE SCALE MRNA]</scope>
    <source>
        <tissue>Skin</tissue>
    </source>
</reference>
<reference key="6">
    <citation type="journal article" date="2013" name="MBio">
        <title>ACBD3 interaction with TBC1 domain 22 protein is differentially affected by enteroviral and kobuviral 3A protein binding.</title>
        <authorList>
            <person name="Greninger A.L."/>
            <person name="Knudsen G.M."/>
            <person name="Betegon M."/>
            <person name="Burlingame A.L."/>
            <person name="DeRisi J.L."/>
        </authorList>
    </citation>
    <scope>PROTEIN SEQUENCE OF 1-11; 30-51; 63-73 AND 130-159</scope>
    <scope>INTERACTION WITH PI4KB; TBC1D22A AND TBC1D22B</scope>
    <scope>IDENTIFICATION BY MASS SPECTROMETRY</scope>
</reference>
<reference key="7">
    <citation type="submission" date="2008-12" db="UniProtKB">
        <authorList>
            <person name="Bienvenut W.V."/>
            <person name="Zebisch A."/>
            <person name="Kolch W."/>
        </authorList>
    </citation>
    <scope>PROTEIN SEQUENCE OF 1-11; 14-57; 63-70; 106-117; 130-169 AND 215-246</scope>
    <scope>CLEAVAGE OF INITIATOR METHIONINE</scope>
    <scope>ACETYLATION AT MET-1 AND THR-2</scope>
    <scope>IDENTIFICATION BY MASS SPECTROMETRY</scope>
    <source>
        <tissue>Colon carcinoma</tissue>
    </source>
</reference>
<reference key="8">
    <citation type="journal article" date="2003" name="Nat. Biotechnol.">
        <title>Exploring proteomes and analyzing protein processing by mass spectrometric identification of sorted N-terminal peptides.</title>
        <authorList>
            <person name="Gevaert K."/>
            <person name="Goethals M."/>
            <person name="Martens L."/>
            <person name="Van Damme J."/>
            <person name="Staes A."/>
            <person name="Thomas G.R."/>
            <person name="Vandekerckhove J."/>
        </authorList>
    </citation>
    <scope>PROTEIN SEQUENCE OF 3-20</scope>
    <source>
        <tissue>Platelet</tissue>
    </source>
</reference>
<reference key="9">
    <citation type="journal article" date="2001" name="J. Biol. Chem.">
        <title>Binding of 14-3-3beta regulates the kinase activity and subcellular localization of testicular protein kinase 1.</title>
        <authorList>
            <person name="Toshima J.Y."/>
            <person name="Toshima J."/>
            <person name="Watanabe T."/>
            <person name="Mizuno K."/>
        </authorList>
    </citation>
    <scope>INTERACTION WITH TESK1</scope>
</reference>
<reference key="10">
    <citation type="journal article" date="2001" name="Mol. Microbiol.">
        <title>Mammalian 14-3-3beta associates with the Chlamydia trachomatis inclusion membrane via its interaction with IncG.</title>
        <authorList>
            <person name="Scidmore M.A."/>
            <person name="Hackstadt T."/>
        </authorList>
    </citation>
    <scope>INTERACTION WITH CHLAMYDIA INCG</scope>
    <scope>SUBUNIT (MICROBIAL INFECTION)</scope>
    <scope>SUBCELLULAR LOCATION (MICROBIAL INFECTION)</scope>
</reference>
<reference key="11">
    <citation type="journal article" date="2001" name="Proc. Natl. Acad. Sci. U.S.A.">
        <title>Role of a pineal cAMP-operated arylalkylamine N-acetyltransferase/14-3-3-binding switch in melatonin synthesis.</title>
        <authorList>
            <person name="Ganguly S."/>
            <person name="Gastel J.A."/>
            <person name="Weller J.L."/>
            <person name="Schwartz C."/>
            <person name="Jaffe H."/>
            <person name="Namboodiri M.A."/>
            <person name="Coon S.L."/>
            <person name="Hickman A.B."/>
            <person name="Rollag M."/>
            <person name="Obsil T."/>
            <person name="Beauverger P."/>
            <person name="Ferry G."/>
            <person name="Boutin J.A."/>
            <person name="Klein D.C."/>
        </authorList>
    </citation>
    <scope>INTERACTION WITH AANAT</scope>
</reference>
<reference key="12">
    <citation type="journal article" date="2003" name="Nature">
        <title>Proteomic characterization of the human centrosome by protein correlation profiling.</title>
        <authorList>
            <person name="Andersen J.S."/>
            <person name="Wilkinson C.J."/>
            <person name="Mayor T."/>
            <person name="Mortensen P."/>
            <person name="Nigg E.A."/>
            <person name="Mann M."/>
        </authorList>
    </citation>
    <scope>IDENTIFICATION BY MASS SPECTROMETRY</scope>
    <source>
        <tissue>Lymphoblast</tissue>
    </source>
</reference>
<reference key="13">
    <citation type="journal article" date="2004" name="Cell">
        <title>The CREB coactivator TORC2 functions as a calcium- and cAMP-sensitive coincidence detector.</title>
        <authorList>
            <person name="Screaton R.A."/>
            <person name="Conkright M.D."/>
            <person name="Katoh Y."/>
            <person name="Best J.L."/>
            <person name="Canettieri G."/>
            <person name="Jeffries S."/>
            <person name="Guzman E."/>
            <person name="Niessen S."/>
            <person name="Yates J.R. III"/>
            <person name="Takemori H."/>
            <person name="Okamoto M."/>
            <person name="Montminy M."/>
        </authorList>
    </citation>
    <scope>INTERACTION WITH CRTC2</scope>
</reference>
<reference key="14">
    <citation type="journal article" date="2004" name="EMBO J.">
        <title>The ARE-dependent mRNA-destabilizing activity of BRF1 is regulated by protein kinase B.</title>
        <authorList>
            <person name="Schmidlin M."/>
            <person name="Lu M."/>
            <person name="Leuenberger S.A."/>
            <person name="Stoecklin G."/>
            <person name="Mallaun M."/>
            <person name="Gross B."/>
            <person name="Gherzi R."/>
            <person name="Hess D."/>
            <person name="Hemmings B.A."/>
            <person name="Moroni C."/>
        </authorList>
    </citation>
    <scope>INTERACTION WITH YWHAB</scope>
</reference>
<reference key="15">
    <citation type="journal article" date="2004" name="J. Cell Biol.">
        <title>A pathway of neuregulin-induced activation of cofilin-phosphatase Slingshot and cofilin in lamellipodia.</title>
        <authorList>
            <person name="Nagata-Ohashi K."/>
            <person name="Ohta Y."/>
            <person name="Goto K."/>
            <person name="Chiba S."/>
            <person name="Mori R."/>
            <person name="Nishita M."/>
            <person name="Ohashi K."/>
            <person name="Kousaka K."/>
            <person name="Iwamatsu A."/>
            <person name="Niwa R."/>
            <person name="Uemura T."/>
            <person name="Mizuno K."/>
        </authorList>
    </citation>
    <scope>INTERACTION WITH SSH1</scope>
</reference>
<reference key="16">
    <citation type="journal article" date="2005" name="Biochem. Biophys. Res. Commun.">
        <title>ADAM22 plays an important role in cell adhesion and spreading with the assistance of 14-3-3.</title>
        <authorList>
            <person name="Zhu P."/>
            <person name="Sang Y."/>
            <person name="Xu H."/>
            <person name="Zhao J."/>
            <person name="Xu R."/>
            <person name="Sun Y."/>
            <person name="Xu T."/>
            <person name="Wang X."/>
            <person name="Chen L."/>
            <person name="Feng H."/>
            <person name="Li C."/>
            <person name="Zhao S."/>
        </authorList>
    </citation>
    <scope>INTERACTION WITH ADAM22</scope>
</reference>
<reference key="17">
    <citation type="journal article" date="2005" name="Nat. Cell Biol.">
        <title>JNK phosphorylation of 14-3-3 proteins regulates nuclear targeting of c-Abl in the apoptotic response to DNA damage.</title>
        <authorList>
            <person name="Yoshida K."/>
            <person name="Yamaguchi T."/>
            <person name="Natsume T."/>
            <person name="Kufe D."/>
            <person name="Miki Y."/>
        </authorList>
    </citation>
    <scope>INTERACTION WITH ABL1</scope>
</reference>
<reference key="18">
    <citation type="journal article" date="2006" name="J. Proteome Res.">
        <title>Proteomic and bioinformatic characterization of the biogenesis and function of melanosomes.</title>
        <authorList>
            <person name="Chi A."/>
            <person name="Valencia J.C."/>
            <person name="Hu Z.-Z."/>
            <person name="Watabe H."/>
            <person name="Yamaguchi H."/>
            <person name="Mangini N.J."/>
            <person name="Huang H."/>
            <person name="Canfield V.A."/>
            <person name="Cheng K.C."/>
            <person name="Yang F."/>
            <person name="Abe R."/>
            <person name="Yamagishi S."/>
            <person name="Shabanowitz J."/>
            <person name="Hearing V.J."/>
            <person name="Wu C."/>
            <person name="Appella E."/>
            <person name="Hunt D.F."/>
        </authorList>
    </citation>
    <scope>SUBCELLULAR LOCATION [LARGE SCALE ANALYSIS]</scope>
    <source>
        <tissue>Melanoma</tissue>
    </source>
</reference>
<reference key="19">
    <citation type="journal article" date="2006" name="Mol. Cell. Proteomics">
        <title>Transgenic mouse proteomics identifies new 14-3-3-associated proteins involved in cytoskeletal rearrangements and cell signaling.</title>
        <authorList>
            <person name="Angrand P.O."/>
            <person name="Segura I."/>
            <person name="Voelkel P."/>
            <person name="Ghidelli S."/>
            <person name="Terry R."/>
            <person name="Brajenovic M."/>
            <person name="Vintersten K."/>
            <person name="Klein R."/>
            <person name="Superti-Furga G."/>
            <person name="Drewes G."/>
            <person name="Kuster B."/>
            <person name="Bouwmeester T."/>
            <person name="Acker-Palmer A."/>
        </authorList>
    </citation>
    <scope>INTERACTION WITH MARK2 AND MARK3</scope>
</reference>
<reference key="20">
    <citation type="journal article" date="2007" name="Genes Dev.">
        <title>Inactivation of YAP oncoprotein by the Hippo pathway is involved in cell contact inhibition and tissue growth control.</title>
        <authorList>
            <person name="Zhao B."/>
            <person name="Wei X."/>
            <person name="Li W."/>
            <person name="Udan R.S."/>
            <person name="Yang Q."/>
            <person name="Kim J."/>
            <person name="Xie J."/>
            <person name="Ikenoue T."/>
            <person name="Yu J."/>
            <person name="Li L."/>
            <person name="Zheng P."/>
            <person name="Ye K."/>
            <person name="Chinnaiyan A."/>
            <person name="Halder G."/>
            <person name="Lai Z.C."/>
            <person name="Guan K.L."/>
        </authorList>
    </citation>
    <scope>INTERACTION WITH YAP1</scope>
</reference>
<reference key="21">
    <citation type="journal article" date="2007" name="Mol. Endocrinol.">
        <title>Homodimerization of Ror2 tyrosine kinase receptor induces 14-3-3(beta) phosphorylation and promotes osteoblast differentiation and bone formation.</title>
        <authorList>
            <person name="Liu Y."/>
            <person name="Ross J.F."/>
            <person name="Bodine P.V.N."/>
            <person name="Billiard J."/>
        </authorList>
    </citation>
    <scope>INTERACTION WITH ROR2</scope>
    <scope>FUNCTION</scope>
    <scope>PHOSPHORYLATION</scope>
    <scope>DIMERIZATION</scope>
    <scope>IDENTIFICATION BY MASS SPECTROMETRY</scope>
</reference>
<reference key="22">
    <citation type="journal article" date="2008" name="Biochem. Biophys. Res. Commun.">
        <title>Sirt2 interacts with 14-3-3 beta/gamma and down-regulates the activity of p53.</title>
        <authorList>
            <person name="Jin Y.H."/>
            <person name="Kim Y.J."/>
            <person name="Kim D.W."/>
            <person name="Baek K.H."/>
            <person name="Kang B.Y."/>
            <person name="Yeo C.Y."/>
            <person name="Lee K.Y."/>
        </authorList>
    </citation>
    <scope>INTERACTION WITH SIRT2</scope>
</reference>
<reference key="23">
    <citation type="journal article" date="2008" name="EMBO J.">
        <title>Phosphorylation-dependent binding of 14-3-3 terminates signalling by the Gab2 docking protein.</title>
        <authorList>
            <person name="Brummer T."/>
            <person name="Larance M."/>
            <person name="Herrera Abreu M.T."/>
            <person name="Lyons R.J."/>
            <person name="Timpson P."/>
            <person name="Emmerich C.H."/>
            <person name="Fleuren E.D.G."/>
            <person name="Lehrbach G.M."/>
            <person name="Schramek D."/>
            <person name="Guilhaus M."/>
            <person name="James D.E."/>
            <person name="Daly R.J."/>
        </authorList>
    </citation>
    <scope>INTERACTION WITH GAB2</scope>
</reference>
<reference key="24">
    <citation type="journal article" date="2009" name="Biol. Psychiatry">
        <title>SLITRK1 binds 14-3-3 and regulates neurite outgrowth in a phosphorylation-dependent manner.</title>
        <authorList>
            <person name="Kajiwara Y."/>
            <person name="Buxbaum J.D."/>
            <person name="Grice D.E."/>
        </authorList>
    </citation>
    <scope>INTERACTION WITH SLITRK1</scope>
</reference>
<reference key="25">
    <citation type="journal article" date="2009" name="J. Biol. Chem.">
        <title>Interaction of Akt-phosphorylated SRPK2 with 14-3-3 mediates cell cycle and cell death in neurons.</title>
        <authorList>
            <person name="Jang S.W."/>
            <person name="Liu X."/>
            <person name="Fu H."/>
            <person name="Rees H."/>
            <person name="Yepes M."/>
            <person name="Levey A."/>
            <person name="Ye K."/>
        </authorList>
    </citation>
    <scope>FUNCTION</scope>
    <scope>INTERACTION WITH SRPK2</scope>
</reference>
<reference key="26">
    <citation type="journal article" date="2009" name="Sci. Signal.">
        <title>Quantitative phosphoproteomic analysis of T cell receptor signaling reveals system-wide modulation of protein-protein interactions.</title>
        <authorList>
            <person name="Mayya V."/>
            <person name="Lundgren D.H."/>
            <person name="Hwang S.-I."/>
            <person name="Rezaul K."/>
            <person name="Wu L."/>
            <person name="Eng J.K."/>
            <person name="Rodionov V."/>
            <person name="Han D.K."/>
        </authorList>
    </citation>
    <scope>IDENTIFICATION BY MASS SPECTROMETRY [LARGE SCALE ANALYSIS]</scope>
    <source>
        <tissue>Leukemic T-cell</tissue>
    </source>
</reference>
<reference key="27">
    <citation type="journal article" date="2009" name="Science">
        <title>Lysine acetylation targets protein complexes and co-regulates major cellular functions.</title>
        <authorList>
            <person name="Choudhary C."/>
            <person name="Kumar C."/>
            <person name="Gnad F."/>
            <person name="Nielsen M.L."/>
            <person name="Rehman M."/>
            <person name="Walther T.C."/>
            <person name="Olsen J.V."/>
            <person name="Mann M."/>
        </authorList>
    </citation>
    <scope>ACETYLATION [LARGE SCALE ANALYSIS] AT LYS-70 AND LYS-117</scope>
    <scope>IDENTIFICATION BY MASS SPECTROMETRY [LARGE SCALE ANALYSIS]</scope>
</reference>
<reference key="28">
    <citation type="journal article" date="2011" name="BMC Syst. Biol.">
        <title>Initial characterization of the human central proteome.</title>
        <authorList>
            <person name="Burkard T.R."/>
            <person name="Planyavsky M."/>
            <person name="Kaupe I."/>
            <person name="Breitwieser F.P."/>
            <person name="Buerckstuemmer T."/>
            <person name="Bennett K.L."/>
            <person name="Superti-Furga G."/>
            <person name="Colinge J."/>
        </authorList>
    </citation>
    <scope>IDENTIFICATION BY MASS SPECTROMETRY [LARGE SCALE ANALYSIS]</scope>
</reference>
<reference key="29">
    <citation type="journal article" date="2011" name="J. Biol. Chem.">
        <title>A-kinase anchoring protein (AKAP)-Lbc anchors a PKN-based signaling complex involved in alpha1-adrenergic receptor-induced p38 activation.</title>
        <authorList>
            <person name="Cariolato L."/>
            <person name="Cavin S."/>
            <person name="Diviani D."/>
        </authorList>
    </citation>
    <scope>FUNCTION</scope>
    <scope>INTERACTION WITH AKAP13</scope>
</reference>
<reference key="30">
    <citation type="journal article" date="2012" name="Biochem. J.">
        <title>RSK phosphorylates SOS1 creating 14-3-3-docking sites and negatively regulating MAPK activation.</title>
        <authorList>
            <person name="Saha M."/>
            <person name="Carriere A."/>
            <person name="Cheerathodi M."/>
            <person name="Zhang X."/>
            <person name="Lavoie G."/>
            <person name="Rush J."/>
            <person name="Roux P.P."/>
            <person name="Ballif B.A."/>
        </authorList>
    </citation>
    <scope>INTERACTION WITH SOS1</scope>
</reference>
<reference key="31">
    <citation type="journal article" date="2012" name="Proc. Natl. Acad. Sci. U.S.A.">
        <title>N-terminal acetylome analyses and functional insights of the N-terminal acetyltransferase NatB.</title>
        <authorList>
            <person name="Van Damme P."/>
            <person name="Lasa M."/>
            <person name="Polevoda B."/>
            <person name="Gazquez C."/>
            <person name="Elosegui-Artola A."/>
            <person name="Kim D.S."/>
            <person name="De Juan-Pardo E."/>
            <person name="Demeyer K."/>
            <person name="Hole K."/>
            <person name="Larrea E."/>
            <person name="Timmerman E."/>
            <person name="Prieto J."/>
            <person name="Arnesen T."/>
            <person name="Sherman F."/>
            <person name="Gevaert K."/>
            <person name="Aldabe R."/>
        </authorList>
    </citation>
    <scope>ACETYLATION [LARGE SCALE ANALYSIS] AT MET-1 AND THR-2</scope>
    <scope>ACETYLATION [LARGE SCALE ANALYSIS] AT MET-1 (ISOFORM SHORT)</scope>
    <scope>CLEAVAGE OF INITIATOR METHIONINE [LARGE SCALE ANALYSIS]</scope>
    <scope>IDENTIFICATION BY MASS SPECTROMETRY [LARGE SCALE ANALYSIS]</scope>
</reference>
<reference key="32">
    <citation type="journal article" date="2013" name="J. Proteome Res.">
        <title>Toward a comprehensive characterization of a human cancer cell phosphoproteome.</title>
        <authorList>
            <person name="Zhou H."/>
            <person name="Di Palma S."/>
            <person name="Preisinger C."/>
            <person name="Peng M."/>
            <person name="Polat A.N."/>
            <person name="Heck A.J."/>
            <person name="Mohammed S."/>
        </authorList>
    </citation>
    <scope>PHOSPHORYLATION [LARGE SCALE ANALYSIS] AT THR-2</scope>
    <scope>IDENTIFICATION BY MASS SPECTROMETRY [LARGE SCALE ANALYSIS]</scope>
    <source>
        <tissue>Erythroleukemia</tissue>
    </source>
</reference>
<reference key="33">
    <citation type="journal article" date="2013" name="Mol. Cell. Proteomics">
        <title>A proteomic perspective of inbuilt viral protein regulation: pUL46 tegument protein is targeted for degradation by ICP0 during herpes simplex virus type 1 infection.</title>
        <authorList>
            <person name="Lin A.E."/>
            <person name="Greco T.M."/>
            <person name="Dohner K."/>
            <person name="Sodeik B."/>
            <person name="Cristea I.M."/>
        </authorList>
    </citation>
    <scope>INTERACTION WITH HERPES SIMPLEX VIRUS 1 UL46 (MICROBIAL INFECTION)</scope>
</reference>
<reference key="34">
    <citation type="journal article" date="2014" name="J. Mol. Biol.">
        <title>Crystal structure of human myosin 1c - the motor in GLUT4 exocytosis: implications for Ca(2+)-regulation and 14-3-3 binding.</title>
        <authorList>
            <person name="Stefan Munnich M.H."/>
            <person name="Manstein D.J."/>
        </authorList>
    </citation>
    <scope>INTERACTION WITH MYO1C</scope>
</reference>
<reference key="35">
    <citation type="journal article" date="2014" name="J. Proteomics">
        <title>An enzyme assisted RP-RPLC approach for in-depth analysis of human liver phosphoproteome.</title>
        <authorList>
            <person name="Bian Y."/>
            <person name="Song C."/>
            <person name="Cheng K."/>
            <person name="Dong M."/>
            <person name="Wang F."/>
            <person name="Huang J."/>
            <person name="Sun D."/>
            <person name="Wang L."/>
            <person name="Ye M."/>
            <person name="Zou H."/>
        </authorList>
    </citation>
    <scope>PHOSPHORYLATION [LARGE SCALE ANALYSIS] AT SER-232</scope>
    <scope>IDENTIFICATION BY MASS SPECTROMETRY [LARGE SCALE ANALYSIS]</scope>
    <source>
        <tissue>Liver</tissue>
    </source>
</reference>
<reference key="36">
    <citation type="journal article" date="2015" name="Biochem. Biophys. Res. Commun.">
        <title>Suppression of death-associated protein kinase 2 by interaction with 14-3-3 proteins.</title>
        <authorList>
            <person name="Yuasa K."/>
            <person name="Ota R."/>
            <person name="Matsuda S."/>
            <person name="Isshiki K."/>
            <person name="Inoue M."/>
            <person name="Tsuji A."/>
        </authorList>
    </citation>
    <scope>INTERACTION WITH DAPK2</scope>
</reference>
<reference key="37">
    <citation type="journal article" date="2015" name="J. Cell Sci.">
        <title>Front-signal-dependent accumulation of the RHOA inhibitor FAM65B at leading edges polarizes neutrophils.</title>
        <authorList>
            <person name="Gao K."/>
            <person name="Tang W."/>
            <person name="Li Y."/>
            <person name="Zhang P."/>
            <person name="Wang D."/>
            <person name="Yu L."/>
            <person name="Wang C."/>
            <person name="Wu D."/>
        </authorList>
    </citation>
    <scope>INTERACTION WITH RIPOR2</scope>
</reference>
<reference key="38">
    <citation type="journal article" date="2015" name="Hum. Mol. Genet.">
        <title>Biochemical and cellular analysis of Ogden syndrome reveals downstream Nt-acetylation defects.</title>
        <authorList>
            <person name="Myklebust L.M."/>
            <person name="Van Damme P."/>
            <person name="Stoeve S.I."/>
            <person name="Doerfel M.J."/>
            <person name="Abboud A."/>
            <person name="Kalvik T.V."/>
            <person name="Grauffel C."/>
            <person name="Jonckheere V."/>
            <person name="Wu Y."/>
            <person name="Swensen J."/>
            <person name="Kaasa H."/>
            <person name="Liszczak G."/>
            <person name="Marmorstein R."/>
            <person name="Reuter N."/>
            <person name="Lyon G.J."/>
            <person name="Gevaert K."/>
            <person name="Arnesen T."/>
        </authorList>
    </citation>
    <scope>ACETYLATION AT THR-2</scope>
    <scope>CLEAVAGE OF INITIATOR METHIONINE</scope>
</reference>
<reference key="39">
    <citation type="journal article" date="2015" name="Proteomics">
        <title>N-terminome analysis of the human mitochondrial proteome.</title>
        <authorList>
            <person name="Vaca Jacome A.S."/>
            <person name="Rabilloud T."/>
            <person name="Schaeffer-Reiss C."/>
            <person name="Rompais M."/>
            <person name="Ayoub D."/>
            <person name="Lane L."/>
            <person name="Bairoch A."/>
            <person name="Van Dorsselaer A."/>
            <person name="Carapito C."/>
        </authorList>
    </citation>
    <scope>IDENTIFICATION BY MASS SPECTROMETRY [LARGE SCALE ANALYSIS]</scope>
</reference>
<reference key="40">
    <citation type="journal article" date="2016" name="Sci. Transl. Med.">
        <title>Familial autoinflammation with neutrophilic dermatosis reveals a regulatory mechanism of pyrin activation.</title>
        <authorList>
            <person name="Masters S.L."/>
            <person name="Lagou V."/>
            <person name="Jeru I."/>
            <person name="Baker P.J."/>
            <person name="Van Eyck L."/>
            <person name="Parry D.A."/>
            <person name="Lawless D."/>
            <person name="De Nardo D."/>
            <person name="Garcia-Perez J.E."/>
            <person name="Dagley L.F."/>
            <person name="Holley C.L."/>
            <person name="Dooley J."/>
            <person name="Moghaddas F."/>
            <person name="Pasciuto E."/>
            <person name="Jeandel P.Y."/>
            <person name="Sciot R."/>
            <person name="Lyras D."/>
            <person name="Webb A.I."/>
            <person name="Nicholson S.E."/>
            <person name="De Somer L."/>
            <person name="van Nieuwenhove E."/>
            <person name="Ruuth-Praz J."/>
            <person name="Copin B."/>
            <person name="Cochet E."/>
            <person name="Medlej-Hashim M."/>
            <person name="Megarbane A."/>
            <person name="Schroder K."/>
            <person name="Savic S."/>
            <person name="Goris A."/>
            <person name="Amselem S."/>
            <person name="Wouters C."/>
            <person name="Liston A."/>
        </authorList>
    </citation>
    <scope>INTERACTION WITH MEFV</scope>
</reference>
<reference key="41">
    <citation type="journal article" date="2021" name="HGG Adv.">
        <title>Missense substitutions at a conserved 14-3-3 binding site in HDAC4 cause a novel intellectual disability syndrome.</title>
        <authorList>
            <consortium name="DDD Study"/>
            <person name="Wakeling E."/>
            <person name="McEntagart M."/>
            <person name="Bruccoleri M."/>
            <person name="Shaw-Smith C."/>
            <person name="Stals K.L."/>
            <person name="Wakeling M."/>
            <person name="Barnicoat A."/>
            <person name="Beesley C."/>
            <person name="Hanson-Kahn A.K."/>
            <person name="Kukolich M."/>
            <person name="Stevenson D.A."/>
            <person name="Campeau P.M."/>
            <person name="Ellard S."/>
            <person name="Elsea S.H."/>
            <person name="Yang X.J."/>
            <person name="Caswell R.C."/>
        </authorList>
    </citation>
    <scope>INTERACTION WITH HDAC4</scope>
</reference>
<reference key="42">
    <citation type="journal article" date="2006" name="Proc. Natl. Acad. Sci. U.S.A.">
        <title>Structural basis for protein-protein interactions in the 14-3-3 protein family.</title>
        <authorList>
            <person name="Yang X."/>
            <person name="Lee W.H."/>
            <person name="Sobott F."/>
            <person name="Papagrigoriou E."/>
            <person name="Robinson C.V."/>
            <person name="Grossmann J.G."/>
            <person name="Sundstroem M."/>
            <person name="Doyle D.A."/>
            <person name="Elkins J.M."/>
        </authorList>
    </citation>
    <scope>X-RAY CRYSTALLOGRAPHY (2.5 ANGSTROMS) OF 1-239</scope>
    <scope>IDENTIFICATION BY MASS SPECTROMETRY</scope>
    <scope>INTERACTION WITH PHOSPHOSERINE MOTIFS</scope>
    <scope>SUBUNIT</scope>
</reference>
<reference key="43">
    <citation type="journal article" date="2011" name="Nature">
        <title>Exome sequencing identifies frequent mutation of the SWI/SNF complex gene PBRM1 in renal carcinoma.</title>
        <authorList>
            <person name="Varela I."/>
            <person name="Tarpey P."/>
            <person name="Raine K."/>
            <person name="Huang D."/>
            <person name="Ong C.K."/>
            <person name="Stephens P."/>
            <person name="Davies H."/>
            <person name="Jones D."/>
            <person name="Lin M.L."/>
            <person name="Teague J."/>
            <person name="Bignell G."/>
            <person name="Butler A."/>
            <person name="Cho J."/>
            <person name="Dalgliesh G.L."/>
            <person name="Galappaththige D."/>
            <person name="Greenman C."/>
            <person name="Hardy C."/>
            <person name="Jia M."/>
            <person name="Latimer C."/>
            <person name="Lau K.W."/>
            <person name="Marshall J."/>
            <person name="McLaren S."/>
            <person name="Menzies A."/>
            <person name="Mudie L."/>
            <person name="Stebbings L."/>
            <person name="Largaespada D.A."/>
            <person name="Wessels L.F.A."/>
            <person name="Richard S."/>
            <person name="Kahnoski R.J."/>
            <person name="Anema J."/>
            <person name="Tuveson D.A."/>
            <person name="Perez-Mancera P.A."/>
            <person name="Mustonen V."/>
            <person name="Fischer A."/>
            <person name="Adams D.J."/>
            <person name="Rust A."/>
            <person name="Chan-On W."/>
            <person name="Subimerb C."/>
            <person name="Dykema K."/>
            <person name="Furge K."/>
            <person name="Campbell P.J."/>
            <person name="Teh B.T."/>
            <person name="Stratton M.R."/>
            <person name="Futreal P.A."/>
        </authorList>
    </citation>
    <scope>VARIANT ILE-99</scope>
</reference>
<gene>
    <name type="primary">YWHAB</name>
</gene>
<proteinExistence type="evidence at protein level"/>
<protein>
    <recommendedName>
        <fullName>14-3-3 protein beta/alpha</fullName>
    </recommendedName>
    <alternativeName>
        <fullName>Protein 1054</fullName>
    </alternativeName>
    <alternativeName>
        <fullName>Protein kinase C inhibitor protein 1</fullName>
        <shortName>KCIP-1</shortName>
    </alternativeName>
    <component>
        <recommendedName>
            <fullName>14-3-3 protein beta/alpha, N-terminally processed</fullName>
        </recommendedName>
    </component>
</protein>
<evidence type="ECO:0000250" key="1"/>
<evidence type="ECO:0000250" key="2">
    <source>
        <dbReference type="UniProtKB" id="P27348"/>
    </source>
</evidence>
<evidence type="ECO:0000250" key="3">
    <source>
        <dbReference type="UniProtKB" id="P68251"/>
    </source>
</evidence>
<evidence type="ECO:0000250" key="4">
    <source>
        <dbReference type="UniProtKB" id="Q9CQV8"/>
    </source>
</evidence>
<evidence type="ECO:0000269" key="5">
    <source>
    </source>
</evidence>
<evidence type="ECO:0000269" key="6">
    <source>
    </source>
</evidence>
<evidence type="ECO:0000269" key="7">
    <source>
    </source>
</evidence>
<evidence type="ECO:0000269" key="8">
    <source>
    </source>
</evidence>
<evidence type="ECO:0000269" key="9">
    <source>
    </source>
</evidence>
<evidence type="ECO:0000269" key="10">
    <source>
    </source>
</evidence>
<evidence type="ECO:0000269" key="11">
    <source>
    </source>
</evidence>
<evidence type="ECO:0000269" key="12">
    <source>
    </source>
</evidence>
<evidence type="ECO:0000269" key="13">
    <source>
    </source>
</evidence>
<evidence type="ECO:0000269" key="14">
    <source>
    </source>
</evidence>
<evidence type="ECO:0000269" key="15">
    <source>
    </source>
</evidence>
<evidence type="ECO:0000269" key="16">
    <source>
    </source>
</evidence>
<evidence type="ECO:0000269" key="17">
    <source>
    </source>
</evidence>
<evidence type="ECO:0000269" key="18">
    <source>
    </source>
</evidence>
<evidence type="ECO:0000269" key="19">
    <source>
    </source>
</evidence>
<evidence type="ECO:0000269" key="20">
    <source>
    </source>
</evidence>
<evidence type="ECO:0000269" key="21">
    <source>
    </source>
</evidence>
<evidence type="ECO:0000269" key="22">
    <source>
    </source>
</evidence>
<evidence type="ECO:0000269" key="23">
    <source>
    </source>
</evidence>
<evidence type="ECO:0000269" key="24">
    <source>
    </source>
</evidence>
<evidence type="ECO:0000269" key="25">
    <source>
    </source>
</evidence>
<evidence type="ECO:0000269" key="26">
    <source>
    </source>
</evidence>
<evidence type="ECO:0000269" key="27">
    <source>
    </source>
</evidence>
<evidence type="ECO:0000269" key="28">
    <source>
    </source>
</evidence>
<evidence type="ECO:0000269" key="29">
    <source>
    </source>
</evidence>
<evidence type="ECO:0000269" key="30">
    <source>
    </source>
</evidence>
<evidence type="ECO:0000269" key="31">
    <source>
    </source>
</evidence>
<evidence type="ECO:0000269" key="32">
    <source>
    </source>
</evidence>
<evidence type="ECO:0000269" key="33">
    <source ref="7"/>
</evidence>
<evidence type="ECO:0000305" key="34"/>
<evidence type="ECO:0000305" key="35">
    <source>
    </source>
</evidence>
<evidence type="ECO:0007744" key="36">
    <source>
    </source>
</evidence>
<evidence type="ECO:0007744" key="37">
    <source>
    </source>
</evidence>
<evidence type="ECO:0007744" key="38">
    <source>
    </source>
</evidence>
<evidence type="ECO:0007744" key="39">
    <source>
    </source>
</evidence>
<evidence type="ECO:0007829" key="40">
    <source>
        <dbReference type="PDB" id="5N10"/>
    </source>
</evidence>
<evidence type="ECO:0007829" key="41">
    <source>
        <dbReference type="PDB" id="6GN0"/>
    </source>
</evidence>
<evidence type="ECO:0007829" key="42">
    <source>
        <dbReference type="PDB" id="8EQ8"/>
    </source>
</evidence>
<feature type="chain" id="PRO_0000367900" description="14-3-3 protein beta/alpha">
    <location>
        <begin position="1"/>
        <end position="246"/>
    </location>
</feature>
<feature type="initiator methionine" description="Removed; alternate" evidence="28 33 37">
    <location>
        <position position="1"/>
    </location>
</feature>
<feature type="chain" id="PRO_0000000003" description="14-3-3 protein beta/alpha, N-terminally processed">
    <location>
        <begin position="2"/>
        <end position="246"/>
    </location>
</feature>
<feature type="site" description="Interaction with phosphoserine on interacting protein" evidence="1">
    <location>
        <position position="58"/>
    </location>
</feature>
<feature type="site" description="Interaction with phosphoserine on interacting protein" evidence="1">
    <location>
        <position position="129"/>
    </location>
</feature>
<feature type="modified residue" description="N-acetylmethionine; in 14-3-3 protein beta/alpha; alternate" evidence="33 37">
    <location>
        <position position="1"/>
    </location>
</feature>
<feature type="modified residue" description="N-acetylthreonine; in 14-3-3 protein beta/alpha, N-terminally processed" evidence="28 33 37">
    <location>
        <position position="2"/>
    </location>
</feature>
<feature type="modified residue" description="Phosphothreonine" evidence="38">
    <location>
        <position position="2"/>
    </location>
</feature>
<feature type="modified residue" description="N6-acetyllysine" evidence="2">
    <location>
        <position position="5"/>
    </location>
</feature>
<feature type="modified residue" description="N6-acetyllysine; alternate" evidence="2">
    <location>
        <position position="51"/>
    </location>
</feature>
<feature type="modified residue" description="Phosphoserine" evidence="4">
    <location>
        <position position="60"/>
    </location>
</feature>
<feature type="modified residue" description="N6-acetyllysine" evidence="36">
    <location>
        <position position="70"/>
    </location>
</feature>
<feature type="modified residue" description="3'-nitrotyrosine" evidence="4">
    <location>
        <position position="84"/>
    </location>
</feature>
<feature type="modified residue" description="3'-nitrotyrosine" evidence="4">
    <location>
        <position position="106"/>
    </location>
</feature>
<feature type="modified residue" description="N6-acetyllysine" evidence="36">
    <location>
        <position position="117"/>
    </location>
</feature>
<feature type="modified residue" description="Phosphoserine" evidence="3">
    <location>
        <position position="186"/>
    </location>
</feature>
<feature type="modified residue" description="Phosphoserine" evidence="39">
    <location>
        <position position="232"/>
    </location>
</feature>
<feature type="cross-link" description="Glycyl lysine isopeptide (Lys-Gly) (interchain with G-Cter in SUMO2); alternate" evidence="2">
    <location>
        <position position="51"/>
    </location>
</feature>
<feature type="splice variant" id="VSP_018632" description="In isoform Short." evidence="34">
    <location>
        <begin position="1"/>
        <end position="2"/>
    </location>
</feature>
<feature type="sequence variant" id="VAR_064762" description="Found in a renal cell carcinoma sample; somatic mutation." evidence="23">
    <original>V</original>
    <variation>I</variation>
    <location>
        <position position="99"/>
    </location>
</feature>
<feature type="helix" evidence="42">
    <location>
        <begin position="5"/>
        <end position="17"/>
    </location>
</feature>
<feature type="helix" evidence="42">
    <location>
        <begin position="21"/>
        <end position="32"/>
    </location>
</feature>
<feature type="turn" evidence="41">
    <location>
        <begin position="33"/>
        <end position="35"/>
    </location>
</feature>
<feature type="helix" evidence="42">
    <location>
        <begin position="40"/>
        <end position="70"/>
    </location>
</feature>
<feature type="turn" evidence="40">
    <location>
        <begin position="73"/>
        <end position="75"/>
    </location>
</feature>
<feature type="helix" evidence="42">
    <location>
        <begin position="76"/>
        <end position="105"/>
    </location>
</feature>
<feature type="helix" evidence="42">
    <location>
        <begin position="107"/>
        <end position="110"/>
    </location>
</feature>
<feature type="helix" evidence="42">
    <location>
        <begin position="114"/>
        <end position="134"/>
    </location>
</feature>
<feature type="helix" evidence="42">
    <location>
        <begin position="138"/>
        <end position="161"/>
    </location>
</feature>
<feature type="helix" evidence="42">
    <location>
        <begin position="167"/>
        <end position="182"/>
    </location>
</feature>
<feature type="helix" evidence="42">
    <location>
        <begin position="187"/>
        <end position="202"/>
    </location>
</feature>
<feature type="helix" evidence="42">
    <location>
        <begin position="203"/>
        <end position="207"/>
    </location>
</feature>
<feature type="turn" evidence="42">
    <location>
        <begin position="210"/>
        <end position="213"/>
    </location>
</feature>
<feature type="helix" evidence="42">
    <location>
        <begin position="214"/>
        <end position="231"/>
    </location>
</feature>
<feature type="modified residue" description="N-acetylmethionine" evidence="37">
    <location sequence="P31946-2">
        <position position="1"/>
    </location>
</feature>
<comment type="function">
    <text evidence="16 20 22">Adapter protein implicated in the regulation of a large spectrum of both general and specialized signaling pathways. Binds to a large number of partners, usually by recognition of a phosphoserine or phosphothreonine motif. Binding generally results in the modulation of the activity of the binding partner. Negative regulator of osteogenesis. Blocks the nuclear translocation of the phosphorylated form (by AKT1) of SRPK2 and antagonizes its stimulatory effect on cyclin D1 expression resulting in blockage of neuronal apoptosis elicited by SRPK2. Negative regulator of signaling cascades that mediate activation of MAP kinases via AKAP13.</text>
</comment>
<comment type="subunit">
    <text evidence="4 6 7 8 9 10 11 12 13 15 16 17 18 19 20 21 22 24 25 27 29 30 31 32">Homodimer (PubMed:17717073). Interacts with SAMSN1 and PRKCE (By similarity). Interacts with AKAP13 (PubMed:21224381). Interacts with SSH1 and TORC2/CRTC2 (PubMed:15159416, PubMed:15454081). Interacts with ABL1; the interaction results in cytoplasmic location of ABL1 and inhibition of cABL-mediated apoptosis (PubMed:15696159). Interacts with ROR2 (dimer); the interaction results in phosphorylation of YWHAB on tyrosine residues (PubMed:17717073). Interacts with GAB2 (PubMed:19172738). Interacts with YAP1 (phosphorylated form) (PubMed:17974916). Interacts with the phosphorylated (by AKT1) form of SRPK2 (PubMed:19592491). Interacts with PKA-phosphorylated AANAT (PubMed:11427721). Interacts with MYO1C (PubMed:24636949). Interacts with SIRT2 (PubMed:18249187). Interacts with the 'Thr-369' phosphorylated form of DAPK2 (PubMed:26047703). Interacts with PI4KB, TBC1D22A and TBC1D22B (PubMed:23572552). Interacts with the 'Ser-1134' and 'Ser-1161' phosphorylated form of SOS1 (PubMed:22827337). Interacts (via phosphorylated form) with YWHAB; this interaction occurs in a protein kinase AKT1-dependent manner (PubMed:15538381). Interacts with SLITRK1 (PubMed:19640509). Interacts with SYNPO2 (phosphorylated form); YWHAB competes with ACTN2 for interaction with SYNPO2 (By similarity). Interacts with RIPOR2 (via phosphorylated form) isoform 2; this interaction occurs in a chemokine-dependent manner and does not compete for binding of RIPOR2 with RHOA nor blocks inhibition of RIPOR2-mediated RHOA activity (PubMed:25588844). Interacts with MARK2 and MARK3 (PubMed:16959763). Interacts with TESK1; the interaction is dependent on the phosphorylation of TESK1 'Ser-437' and inhibits TESK1 kinase activity (PubMed:11555644). Interacts with MEFV (PubMed:27030597). Interacts with HDAC4 (PubMed:33537682). Interacts with ADAM22 (via C-terminus) (PubMed:15882968).</text>
</comment>
<comment type="subunit">
    <text evidence="26">(Microbial infection) Interacts with herpes simplex virus 1 protein UL46.</text>
</comment>
<comment type="subunit">
    <text evidence="35">(Microbial infection) Probably interacts with Chlamydia trachomatis protein IncG.</text>
</comment>
<comment type="interaction">
    <interactant intactId="EBI-359815">
        <id>P31946</id>
    </interactant>
    <interactant intactId="EBI-1567267">
        <id>Q9P0K1-3</id>
        <label>ADAM22</label>
    </interactant>
    <organismsDiffer>false</organismsDiffer>
    <experiments>2</experiments>
</comment>
<comment type="interaction">
    <interactant intactId="EBI-359815">
        <id>P31946</id>
    </interactant>
    <interactant intactId="EBI-1373806">
        <id>Q12802</id>
        <label>AKAP13</label>
    </interactant>
    <organismsDiffer>false</organismsDiffer>
    <experiments>5</experiments>
</comment>
<comment type="interaction">
    <interactant intactId="EBI-359815">
        <id>P31946</id>
    </interactant>
    <interactant intactId="EBI-720593">
        <id>Q96B36</id>
        <label>AKT1S1</label>
    </interactant>
    <organismsDiffer>false</organismsDiffer>
    <experiments>4</experiments>
</comment>
<comment type="interaction">
    <interactant intactId="EBI-359815">
        <id>P31946</id>
    </interactant>
    <interactant intactId="EBI-25928834">
        <id>A0A0S2Z5Q7</id>
        <label>ALS2</label>
    </interactant>
    <organismsDiffer>false</organismsDiffer>
    <experiments>3</experiments>
</comment>
<comment type="interaction">
    <interactant intactId="EBI-359815">
        <id>P31946</id>
    </interactant>
    <interactant intactId="EBI-77613">
        <id>P05067</id>
        <label>APP</label>
    </interactant>
    <organismsDiffer>false</organismsDiffer>
    <experiments>3</experiments>
</comment>
<comment type="interaction">
    <interactant intactId="EBI-359815">
        <id>P31946</id>
    </interactant>
    <interactant intactId="EBI-930964">
        <id>P54253</id>
        <label>ATXN1</label>
    </interactant>
    <organismsDiffer>false</organismsDiffer>
    <experiments>5</experiments>
</comment>
<comment type="interaction">
    <interactant intactId="EBI-359815">
        <id>P31946</id>
    </interactant>
    <interactant intactId="EBI-700771">
        <id>Q92934</id>
        <label>BAD</label>
    </interactant>
    <organismsDiffer>false</organismsDiffer>
    <experiments>6</experiments>
</comment>
<comment type="interaction">
    <interactant intactId="EBI-359815">
        <id>P31946</id>
    </interactant>
    <interactant intactId="EBI-365980">
        <id>P15056</id>
        <label>BRAF</label>
    </interactant>
    <organismsDiffer>false</organismsDiffer>
    <experiments>9</experiments>
</comment>
<comment type="interaction">
    <interactant intactId="EBI-359815">
        <id>P31946</id>
    </interactant>
    <interactant intactId="EBI-518228">
        <id>P22681</id>
        <label>CBL</label>
    </interactant>
    <organismsDiffer>false</organismsDiffer>
    <experiments>5</experiments>
</comment>
<comment type="interaction">
    <interactant intactId="EBI-359815">
        <id>P31946</id>
    </interactant>
    <interactant intactId="EBI-722425">
        <id>O00257</id>
        <label>CBX4</label>
    </interactant>
    <organismsDiffer>false</organismsDiffer>
    <experiments>3</experiments>
</comment>
<comment type="interaction">
    <interactant intactId="EBI-359815">
        <id>P31946</id>
    </interactant>
    <interactant intactId="EBI-747671">
        <id>P30304</id>
        <label>CDC25A</label>
    </interactant>
    <organismsDiffer>false</organismsDiffer>
    <experiments>10</experiments>
</comment>
<comment type="interaction">
    <interactant intactId="EBI-359815">
        <id>P31946</id>
    </interactant>
    <interactant intactId="EBI-1051746">
        <id>P30305</id>
        <label>CDC25B</label>
    </interactant>
    <organismsDiffer>false</organismsDiffer>
    <experiments>6</experiments>
</comment>
<comment type="interaction">
    <interactant intactId="EBI-359815">
        <id>P31946</id>
    </interactant>
    <interactant intactId="EBI-974439">
        <id>P30307</id>
        <label>CDC25C</label>
    </interactant>
    <organismsDiffer>false</organismsDiffer>
    <experiments>8</experiments>
</comment>
<comment type="interaction">
    <interactant intactId="EBI-359815">
        <id>P31946</id>
    </interactant>
    <interactant intactId="EBI-1043945">
        <id>O94921</id>
        <label>CDK14</label>
    </interactant>
    <organismsDiffer>false</organismsDiffer>
    <experiments>6</experiments>
</comment>
<comment type="interaction">
    <interactant intactId="EBI-359815">
        <id>P31946</id>
    </interactant>
    <interactant intactId="EBI-974488">
        <id>O14757</id>
        <label>CHEK1</label>
    </interactant>
    <organismsDiffer>false</organismsDiffer>
    <experiments>2</experiments>
</comment>
<comment type="interaction">
    <interactant intactId="EBI-359815">
        <id>P31946</id>
    </interactant>
    <interactant intactId="EBI-1181987">
        <id>Q53ET0</id>
        <label>CRTC2</label>
    </interactant>
    <organismsDiffer>false</organismsDiffer>
    <experiments>6</experiments>
</comment>
<comment type="interaction">
    <interactant intactId="EBI-359815">
        <id>P31946</id>
    </interactant>
    <interactant intactId="EBI-3951744">
        <id>Q9NYF0</id>
        <label>DACT1</label>
    </interactant>
    <organismsDiffer>false</organismsDiffer>
    <experiments>4</experiments>
</comment>
<comment type="interaction">
    <interactant intactId="EBI-359815">
        <id>P31946</id>
    </interactant>
    <interactant intactId="EBI-1053621">
        <id>Q13627-2</id>
        <label>DYRK1A</label>
    </interactant>
    <organismsDiffer>false</organismsDiffer>
    <experiments>3</experiments>
</comment>
<comment type="interaction">
    <interactant intactId="EBI-359815">
        <id>P31946</id>
    </interactant>
    <interactant intactId="EBI-975200">
        <id>Q9UQC2</id>
        <label>GAB2</label>
    </interactant>
    <organismsDiffer>false</organismsDiffer>
    <experiments>7</experiments>
</comment>
<comment type="interaction">
    <interactant intactId="EBI-359815">
        <id>P31946</id>
    </interactant>
    <interactant intactId="EBI-744104">
        <id>P55040</id>
        <label>GEM</label>
    </interactant>
    <organismsDiffer>false</organismsDiffer>
    <experiments>4</experiments>
</comment>
<comment type="interaction">
    <interactant intactId="EBI-359815">
        <id>P31946</id>
    </interactant>
    <interactant intactId="EBI-308629">
        <id>P56524</id>
        <label>HDAC4</label>
    </interactant>
    <organismsDiffer>false</organismsDiffer>
    <experiments>6</experiments>
</comment>
<comment type="interaction">
    <interactant intactId="EBI-359815">
        <id>P31946</id>
    </interactant>
    <interactant intactId="EBI-466029">
        <id>P42858</id>
        <label>HTT</label>
    </interactant>
    <organismsDiffer>false</organismsDiffer>
    <experiments>11</experiments>
</comment>
<comment type="interaction">
    <interactant intactId="EBI-359815">
        <id>P31946</id>
    </interactant>
    <interactant intactId="EBI-5323863">
        <id>Q5S007</id>
        <label>LRRK2</label>
    </interactant>
    <organismsDiffer>false</organismsDiffer>
    <experiments>5</experiments>
</comment>
<comment type="interaction">
    <interactant intactId="EBI-359815">
        <id>P31946</id>
    </interactant>
    <interactant intactId="EBI-307281">
        <id>Q99759</id>
        <label>MAP3K3</label>
    </interactant>
    <organismsDiffer>false</organismsDiffer>
    <experiments>5</experiments>
</comment>
<comment type="interaction">
    <interactant intactId="EBI-359815">
        <id>P31946</id>
    </interactant>
    <interactant intactId="EBI-476263">
        <id>Q99683</id>
        <label>MAP3K5</label>
    </interactant>
    <organismsDiffer>false</organismsDiffer>
    <experiments>4</experiments>
</comment>
<comment type="interaction">
    <interactant intactId="EBI-359815">
        <id>P31946</id>
    </interactant>
    <interactant intactId="EBI-516560">
        <id>Q7KZI7</id>
        <label>MARK2</label>
    </interactant>
    <organismsDiffer>false</organismsDiffer>
    <experiments>8</experiments>
</comment>
<comment type="interaction">
    <interactant intactId="EBI-359815">
        <id>P31946</id>
    </interactant>
    <interactant intactId="EBI-707595">
        <id>P27448</id>
        <label>MARK3</label>
    </interactant>
    <organismsDiffer>false</organismsDiffer>
    <experiments>11</experiments>
</comment>
<comment type="interaction">
    <interactant intactId="EBI-359815">
        <id>P31946</id>
    </interactant>
    <interactant intactId="EBI-1047946">
        <id>P26045</id>
        <label>PTPN3</label>
    </interactant>
    <organismsDiffer>false</organismsDiffer>
    <experiments>7</experiments>
</comment>
<comment type="interaction">
    <interactant intactId="EBI-359815">
        <id>P31946</id>
    </interactant>
    <interactant intactId="EBI-365996">
        <id>P04049</id>
        <label>RAF1</label>
    </interactant>
    <organismsDiffer>false</organismsDiffer>
    <experiments>38</experiments>
</comment>
<comment type="interaction">
    <interactant intactId="EBI-359815">
        <id>P31946</id>
    </interactant>
    <interactant intactId="EBI-1056589">
        <id>Q96TC7</id>
        <label>RMDN3</label>
    </interactant>
    <organismsDiffer>false</organismsDiffer>
    <experiments>6</experiments>
</comment>
<comment type="interaction">
    <interactant intactId="EBI-359815">
        <id>P31946</id>
    </interactant>
    <interactant intactId="EBI-1111534">
        <id>P61587</id>
        <label>RND3</label>
    </interactant>
    <organismsDiffer>false</organismsDiffer>
    <experiments>3</experiments>
</comment>
<comment type="interaction">
    <interactant intactId="EBI-359815">
        <id>P31946</id>
    </interactant>
    <interactant intactId="EBI-2822128">
        <id>Q96JI7</id>
        <label>SPG11</label>
    </interactant>
    <organismsDiffer>false</organismsDiffer>
    <experiments>2</experiments>
</comment>
<comment type="interaction">
    <interactant intactId="EBI-359815">
        <id>P31946</id>
    </interactant>
    <interactant intactId="EBI-593303">
        <id>P78362</id>
        <label>SRPK2</label>
    </interactant>
    <organismsDiffer>false</organismsDiffer>
    <experiments>2</experiments>
</comment>
<comment type="interaction">
    <interactant intactId="EBI-359815">
        <id>P31946</id>
    </interactant>
    <interactant intactId="EBI-1222387">
        <id>Q8WYL5</id>
        <label>SSH1</label>
    </interactant>
    <organismsDiffer>false</organismsDiffer>
    <experiments>3</experiments>
</comment>
<comment type="interaction">
    <interactant intactId="EBI-359815">
        <id>P31946</id>
    </interactant>
    <interactant intactId="EBI-396587">
        <id>P49815</id>
        <label>TSC2</label>
    </interactant>
    <organismsDiffer>false</organismsDiffer>
    <experiments>8</experiments>
</comment>
<comment type="interaction">
    <interactant intactId="EBI-359815">
        <id>P31946</id>
    </interactant>
    <interactant intactId="EBI-1044059">
        <id>P46937</id>
        <label>YAP1</label>
    </interactant>
    <organismsDiffer>false</organismsDiffer>
    <experiments>9</experiments>
</comment>
<comment type="interaction">
    <interactant intactId="EBI-359815">
        <id>P31946</id>
    </interactant>
    <interactant intactId="EBI-359815">
        <id>P31946</id>
        <label>YWHAB</label>
    </interactant>
    <organismsDiffer>false</organismsDiffer>
    <experiments>3</experiments>
</comment>
<comment type="interaction">
    <interactant intactId="EBI-359815">
        <id>P31946</id>
    </interactant>
    <interactant intactId="EBI-356498">
        <id>P62258</id>
        <label>YWHAE</label>
    </interactant>
    <organismsDiffer>false</organismsDiffer>
    <experiments>15</experiments>
</comment>
<comment type="interaction">
    <interactant intactId="EBI-359815">
        <id>P31946</id>
    </interactant>
    <interactant intactId="EBI-359832">
        <id>P61981</id>
        <label>YWHAG</label>
    </interactant>
    <organismsDiffer>false</organismsDiffer>
    <experiments>9</experiments>
</comment>
<comment type="interaction">
    <interactant intactId="EBI-359815">
        <id>P31946</id>
    </interactant>
    <interactant intactId="EBI-359854">
        <id>P27348</id>
        <label>YWHAQ</label>
    </interactant>
    <organismsDiffer>false</organismsDiffer>
    <experiments>8</experiments>
</comment>
<comment type="interaction">
    <interactant intactId="EBI-359815">
        <id>P31946</id>
    </interactant>
    <interactant intactId="EBI-3940507">
        <id>Q9H8N7</id>
        <label>ZNF395</label>
    </interactant>
    <organismsDiffer>false</organismsDiffer>
    <experiments>3</experiments>
</comment>
<comment type="interaction">
    <interactant intactId="EBI-359815">
        <id>P31946</id>
    </interactant>
    <interactant intactId="EBI-7540603">
        <id>P67828</id>
        <label>CSNK1A1</label>
    </interactant>
    <organismsDiffer>true</organismsDiffer>
    <experiments>3</experiments>
</comment>
<comment type="interaction">
    <interactant intactId="EBI-359815">
        <id>P31946</id>
    </interactant>
    <interactant intactId="EBI-7082069">
        <id>P55041</id>
        <label>Gem</label>
    </interactant>
    <organismsDiffer>true</organismsDiffer>
    <experiments>3</experiments>
</comment>
<comment type="interaction">
    <interactant intactId="EBI-359815">
        <id>P31946</id>
    </interactant>
    <interactant intactId="EBI-3843983">
        <id>Q11184</id>
        <label>let-756</label>
    </interactant>
    <organismsDiffer>true</organismsDiffer>
    <experiments>2</experiments>
</comment>
<comment type="interaction">
    <interactant intactId="EBI-359815">
        <id>P31946</id>
    </interactant>
    <interactant intactId="EBI-6930266">
        <id>P61588</id>
        <label>Rnd3</label>
    </interactant>
    <organismsDiffer>true</organismsDiffer>
    <experiments>5</experiments>
</comment>
<comment type="interaction">
    <interactant intactId="EBI-359815">
        <id>P31946</id>
    </interactant>
    <interactant intactId="EBI-7623057">
        <id>Q91YE8</id>
        <label>Synpo2</label>
    </interactant>
    <organismsDiffer>true</organismsDiffer>
    <experiments>3</experiments>
</comment>
<comment type="interaction">
    <interactant intactId="EBI-359815">
        <id>P31946</id>
    </interactant>
    <interactant intactId="EBI-2504426">
        <id>B7UM99</id>
        <label>tir</label>
    </interactant>
    <organismsDiffer>true</organismsDiffer>
    <experiments>2</experiments>
</comment>
<comment type="interaction">
    <interactant intactId="EBI-359815">
        <id>P31946</id>
    </interactant>
    <interactant intactId="EBI-647803">
        <id>P22893</id>
        <label>Zfp36</label>
    </interactant>
    <organismsDiffer>true</organismsDiffer>
    <experiments>5</experiments>
</comment>
<comment type="interaction">
    <interactant intactId="EBI-359815">
        <id>P31946</id>
    </interactant>
    <interactant intactId="EBI-6248077">
        <id>Q76353</id>
    </interactant>
    <organismsDiffer>true</organismsDiffer>
    <experiments>3</experiments>
</comment>
<comment type="subcellular location">
    <subcellularLocation>
        <location evidence="14">Cytoplasm</location>
    </subcellularLocation>
    <subcellularLocation>
        <location evidence="14">Melanosome</location>
    </subcellularLocation>
    <text>Identified by mass spectrometry in melanosome fractions from stage I to stage IV.</text>
</comment>
<comment type="subcellular location">
    <subcellularLocation>
        <location evidence="5">Vacuole membrane</location>
    </subcellularLocation>
    <text evidence="5">(Microbial infection) Upon infection with Chlamydia trachomatis, this protein is associated with the pathogen-containing vacuole membrane where it colocalizes with IncG.</text>
</comment>
<comment type="alternative products">
    <event type="alternative initiation"/>
    <isoform>
        <id>P31946-1</id>
        <name>Long</name>
        <sequence type="displayed"/>
    </isoform>
    <isoform>
        <id>P31946-2</id>
        <name>Short</name>
        <sequence type="described" ref="VSP_018632"/>
    </isoform>
</comment>
<comment type="PTM">
    <text evidence="1">The alpha, brain-specific form differs from the beta form in being phosphorylated. Phosphorylated on Ser-60 by protein kinase C delta type catalytic subunit in a sphingosine-dependent fashion.</text>
</comment>
<comment type="similarity">
    <text evidence="34">Belongs to the 14-3-3 family.</text>
</comment>
<name>1433B_HUMAN</name>
<sequence length="246" mass="28082">MTMDKSELVQKAKLAEQAERYDDMAAAMKAVTEQGHELSNEERNLLSVAYKNVVGARRSSWRVISSIEQKTERNEKKQQMGKEYREKIEAELQDICNDVLELLDKYLIPNATQPESKVFYLKMKGDYFRYLSEVASGDNKQTTVSNSQQAYQEAFEISKKEMQPTHPIRLGLALNFSVFYYEILNSPEKACSLAKTAFDEAIAELDTLNEESYKDSTLIMQLLRDNLTLWTSENQGDEGDAGEGEN</sequence>
<keyword id="KW-0002">3D-structure</keyword>
<keyword id="KW-0007">Acetylation</keyword>
<keyword id="KW-0024">Alternative initiation</keyword>
<keyword id="KW-0963">Cytoplasm</keyword>
<keyword id="KW-0903">Direct protein sequencing</keyword>
<keyword id="KW-0945">Host-virus interaction</keyword>
<keyword id="KW-1017">Isopeptide bond</keyword>
<keyword id="KW-0472">Membrane</keyword>
<keyword id="KW-0944">Nitration</keyword>
<keyword id="KW-0597">Phosphoprotein</keyword>
<keyword id="KW-1267">Proteomics identification</keyword>
<keyword id="KW-1185">Reference proteome</keyword>
<keyword id="KW-0832">Ubl conjugation</keyword>
<keyword id="KW-0926">Vacuole</keyword>
<dbReference type="EMBL" id="X57346">
    <property type="protein sequence ID" value="CAA40621.1"/>
    <property type="molecule type" value="mRNA"/>
</dbReference>
<dbReference type="EMBL" id="AK292717">
    <property type="protein sequence ID" value="BAF85406.1"/>
    <property type="molecule type" value="mRNA"/>
</dbReference>
<dbReference type="EMBL" id="AL008725">
    <property type="status" value="NOT_ANNOTATED_CDS"/>
    <property type="molecule type" value="Genomic_DNA"/>
</dbReference>
<dbReference type="EMBL" id="CH471077">
    <property type="protein sequence ID" value="EAW75893.1"/>
    <property type="molecule type" value="Genomic_DNA"/>
</dbReference>
<dbReference type="EMBL" id="CH471077">
    <property type="protein sequence ID" value="EAW75894.1"/>
    <property type="molecule type" value="Genomic_DNA"/>
</dbReference>
<dbReference type="EMBL" id="CH471077">
    <property type="protein sequence ID" value="EAW75896.1"/>
    <property type="molecule type" value="Genomic_DNA"/>
</dbReference>
<dbReference type="EMBL" id="BC001359">
    <property type="protein sequence ID" value="AAH01359.1"/>
    <property type="molecule type" value="mRNA"/>
</dbReference>
<dbReference type="CCDS" id="CCDS13339.1">
    <molecule id="P31946-1"/>
</dbReference>
<dbReference type="PIR" id="S34755">
    <property type="entry name" value="S34755"/>
</dbReference>
<dbReference type="RefSeq" id="NP_003395.1">
    <molecule id="P31946-1"/>
    <property type="nucleotide sequence ID" value="NM_003404.5"/>
</dbReference>
<dbReference type="RefSeq" id="NP_647539.1">
    <molecule id="P31946-1"/>
    <property type="nucleotide sequence ID" value="NM_139323.4"/>
</dbReference>
<dbReference type="RefSeq" id="XP_016883528.1">
    <property type="nucleotide sequence ID" value="XM_017028039.1"/>
</dbReference>
<dbReference type="PDB" id="2BQ0">
    <property type="method" value="X-ray"/>
    <property type="resolution" value="2.50 A"/>
    <property type="chains" value="A/B=2-239"/>
</dbReference>
<dbReference type="PDB" id="2C23">
    <property type="method" value="X-ray"/>
    <property type="resolution" value="2.65 A"/>
    <property type="chains" value="A=2-239"/>
</dbReference>
<dbReference type="PDB" id="4DNK">
    <property type="method" value="X-ray"/>
    <property type="resolution" value="2.20 A"/>
    <property type="chains" value="A/B=1-246"/>
</dbReference>
<dbReference type="PDB" id="5N10">
    <property type="method" value="X-ray"/>
    <property type="resolution" value="1.60 A"/>
    <property type="chains" value="A/B=1-246"/>
</dbReference>
<dbReference type="PDB" id="6A5Q">
    <property type="method" value="X-ray"/>
    <property type="resolution" value="2.00 A"/>
    <property type="chains" value="A/B/C=1-246"/>
</dbReference>
<dbReference type="PDB" id="6BYK">
    <property type="method" value="X-ray"/>
    <property type="resolution" value="3.00 A"/>
    <property type="chains" value="A/B/C/D=3-232"/>
</dbReference>
<dbReference type="PDB" id="6GN0">
    <property type="method" value="X-ray"/>
    <property type="resolution" value="3.24 A"/>
    <property type="chains" value="A/B/C/D=1-239"/>
</dbReference>
<dbReference type="PDB" id="6GN8">
    <property type="method" value="X-ray"/>
    <property type="resolution" value="2.34 A"/>
    <property type="chains" value="A/B=1-234"/>
</dbReference>
<dbReference type="PDB" id="6GNJ">
    <property type="method" value="X-ray"/>
    <property type="resolution" value="3.24 A"/>
    <property type="chains" value="A/B=1-234"/>
</dbReference>
<dbReference type="PDB" id="6GNK">
    <property type="method" value="X-ray"/>
    <property type="resolution" value="2.55 A"/>
    <property type="chains" value="A/B=1-234"/>
</dbReference>
<dbReference type="PDB" id="6GNN">
    <property type="method" value="X-ray"/>
    <property type="resolution" value="3.79 A"/>
    <property type="chains" value="A=1-239"/>
</dbReference>
<dbReference type="PDB" id="6HEP">
    <property type="method" value="X-ray"/>
    <property type="resolution" value="1.86 A"/>
    <property type="chains" value="A/B/C/D=1-232"/>
</dbReference>
<dbReference type="PDB" id="8DP5">
    <property type="method" value="EM"/>
    <property type="resolution" value="3.10 A"/>
    <property type="chains" value="C=1-246"/>
</dbReference>
<dbReference type="PDB" id="8EQ8">
    <property type="method" value="X-ray"/>
    <property type="resolution" value="1.50 A"/>
    <property type="chains" value="A/B=1-239"/>
</dbReference>
<dbReference type="PDB" id="8EQH">
    <property type="method" value="X-ray"/>
    <property type="resolution" value="1.90 A"/>
    <property type="chains" value="A/B=1-239"/>
</dbReference>
<dbReference type="PDBsum" id="2BQ0"/>
<dbReference type="PDBsum" id="2C23"/>
<dbReference type="PDBsum" id="4DNK"/>
<dbReference type="PDBsum" id="5N10"/>
<dbReference type="PDBsum" id="6A5Q"/>
<dbReference type="PDBsum" id="6BYK"/>
<dbReference type="PDBsum" id="6GN0"/>
<dbReference type="PDBsum" id="6GN8"/>
<dbReference type="PDBsum" id="6GNJ"/>
<dbReference type="PDBsum" id="6GNK"/>
<dbReference type="PDBsum" id="6GNN"/>
<dbReference type="PDBsum" id="6HEP"/>
<dbReference type="PDBsum" id="8DP5"/>
<dbReference type="PDBsum" id="8EQ8"/>
<dbReference type="PDBsum" id="8EQH"/>
<dbReference type="EMDB" id="EMD-27630"/>
<dbReference type="SASBDB" id="P31946"/>
<dbReference type="SMR" id="P31946"/>
<dbReference type="BioGRID" id="113361">
    <property type="interactions" value="1123"/>
</dbReference>
<dbReference type="CORUM" id="P31946"/>
<dbReference type="DIP" id="DIP-743N"/>
<dbReference type="ELM" id="P31946"/>
<dbReference type="FunCoup" id="P31946">
    <property type="interactions" value="3698"/>
</dbReference>
<dbReference type="IntAct" id="P31946">
    <property type="interactions" value="775"/>
</dbReference>
<dbReference type="MINT" id="P31946"/>
<dbReference type="STRING" id="9606.ENSP00000361930"/>
<dbReference type="BindingDB" id="P31946"/>
<dbReference type="ChEMBL" id="CHEMBL3710403"/>
<dbReference type="DrugBank" id="DB09130">
    <property type="generic name" value="Copper"/>
</dbReference>
<dbReference type="DrugBank" id="DB12695">
    <property type="generic name" value="Phenethyl Isothiocyanate"/>
</dbReference>
<dbReference type="GlyGen" id="P31946">
    <property type="glycosylation" value="1 site, 1 O-linked glycan (1 site)"/>
</dbReference>
<dbReference type="iPTMnet" id="P31946"/>
<dbReference type="MetOSite" id="P31946"/>
<dbReference type="PhosphoSitePlus" id="P31946"/>
<dbReference type="SwissPalm" id="P31946"/>
<dbReference type="BioMuta" id="YWHAB"/>
<dbReference type="DMDM" id="1345590"/>
<dbReference type="OGP" id="P31946"/>
<dbReference type="REPRODUCTION-2DPAGE" id="IPI00216318"/>
<dbReference type="CPTAC" id="CPTAC-142"/>
<dbReference type="jPOST" id="P31946"/>
<dbReference type="MassIVE" id="P31946"/>
<dbReference type="PaxDb" id="9606-ENSP00000361930"/>
<dbReference type="PeptideAtlas" id="P31946"/>
<dbReference type="PRIDE" id="P31946"/>
<dbReference type="ProteomicsDB" id="54816"/>
<dbReference type="ProteomicsDB" id="54817">
    <molecule id="P31946-2"/>
</dbReference>
<dbReference type="Pumba" id="P31946"/>
<dbReference type="TopDownProteomics" id="P31946-1">
    <molecule id="P31946-1"/>
</dbReference>
<dbReference type="TopDownProteomics" id="P31946-2">
    <molecule id="P31946-2"/>
</dbReference>
<dbReference type="Antibodypedia" id="1906">
    <property type="antibodies" value="696 antibodies from 48 providers"/>
</dbReference>
<dbReference type="CPTC" id="P31946">
    <property type="antibodies" value="3 antibodies"/>
</dbReference>
<dbReference type="DNASU" id="7529"/>
<dbReference type="Ensembl" id="ENST00000353703.9">
    <molecule id="P31946-1"/>
    <property type="protein sequence ID" value="ENSP00000300161.4"/>
    <property type="gene ID" value="ENSG00000166913.13"/>
</dbReference>
<dbReference type="Ensembl" id="ENST00000372839.7">
    <molecule id="P31946-1"/>
    <property type="protein sequence ID" value="ENSP00000361930.3"/>
    <property type="gene ID" value="ENSG00000166913.13"/>
</dbReference>
<dbReference type="GeneID" id="7529"/>
<dbReference type="KEGG" id="hsa:7529"/>
<dbReference type="MANE-Select" id="ENST00000353703.9">
    <property type="protein sequence ID" value="ENSP00000300161.4"/>
    <property type="RefSeq nucleotide sequence ID" value="NM_139323.4"/>
    <property type="RefSeq protein sequence ID" value="NP_647539.1"/>
</dbReference>
<dbReference type="AGR" id="HGNC:12849"/>
<dbReference type="CTD" id="7529"/>
<dbReference type="DisGeNET" id="7529"/>
<dbReference type="GeneCards" id="YWHAB"/>
<dbReference type="HGNC" id="HGNC:12849">
    <property type="gene designation" value="YWHAB"/>
</dbReference>
<dbReference type="HPA" id="ENSG00000166913">
    <property type="expression patterns" value="Low tissue specificity"/>
</dbReference>
<dbReference type="MIM" id="601289">
    <property type="type" value="gene"/>
</dbReference>
<dbReference type="neXtProt" id="NX_P31946"/>
<dbReference type="OpenTargets" id="ENSG00000166913"/>
<dbReference type="PharmGKB" id="PA37438"/>
<dbReference type="VEuPathDB" id="HostDB:ENSG00000166913"/>
<dbReference type="eggNOG" id="KOG0841">
    <property type="taxonomic scope" value="Eukaryota"/>
</dbReference>
<dbReference type="GeneTree" id="ENSGT01090000260040"/>
<dbReference type="HOGENOM" id="CLU_058290_1_0_1"/>
<dbReference type="InParanoid" id="P31946"/>
<dbReference type="OMA" id="AECKVFY"/>
<dbReference type="OrthoDB" id="10260625at2759"/>
<dbReference type="PAN-GO" id="P31946">
    <property type="GO annotations" value="3 GO annotations based on evolutionary models"/>
</dbReference>
<dbReference type="PhylomeDB" id="P31946"/>
<dbReference type="TreeFam" id="TF102003"/>
<dbReference type="PathwayCommons" id="P31946"/>
<dbReference type="Reactome" id="R-HSA-111447">
    <property type="pathway name" value="Activation of BAD and translocation to mitochondria"/>
</dbReference>
<dbReference type="Reactome" id="R-HSA-1445148">
    <property type="pathway name" value="Translocation of SLC2A4 (GLUT4) to the plasma membrane"/>
</dbReference>
<dbReference type="Reactome" id="R-HSA-165159">
    <property type="pathway name" value="MTOR signalling"/>
</dbReference>
<dbReference type="Reactome" id="R-HSA-166208">
    <property type="pathway name" value="mTORC1-mediated signalling"/>
</dbReference>
<dbReference type="Reactome" id="R-HSA-170968">
    <property type="pathway name" value="Frs2-mediated activation"/>
</dbReference>
<dbReference type="Reactome" id="R-HSA-170984">
    <property type="pathway name" value="ARMS-mediated activation"/>
</dbReference>
<dbReference type="Reactome" id="R-HSA-2028269">
    <property type="pathway name" value="Signaling by Hippo"/>
</dbReference>
<dbReference type="Reactome" id="R-HSA-392517">
    <property type="pathway name" value="Rap1 signalling"/>
</dbReference>
<dbReference type="Reactome" id="R-HSA-450385">
    <property type="pathway name" value="Butyrate Response Factor 1 (BRF1) binds and destabilizes mRNA"/>
</dbReference>
<dbReference type="Reactome" id="R-HSA-450513">
    <property type="pathway name" value="Tristetraprolin (TTP, ZFP36) binds and destabilizes mRNA"/>
</dbReference>
<dbReference type="Reactome" id="R-HSA-5625740">
    <property type="pathway name" value="RHO GTPases activate PKNs"/>
</dbReference>
<dbReference type="Reactome" id="R-HSA-5628897">
    <property type="pathway name" value="TP53 Regulates Metabolic Genes"/>
</dbReference>
<dbReference type="Reactome" id="R-HSA-5673000">
    <property type="pathway name" value="RAF activation"/>
</dbReference>
<dbReference type="Reactome" id="R-HSA-5674135">
    <property type="pathway name" value="MAP2K and MAPK activation"/>
</dbReference>
<dbReference type="Reactome" id="R-HSA-5675221">
    <property type="pathway name" value="Negative regulation of MAPK pathway"/>
</dbReference>
<dbReference type="Reactome" id="R-HSA-6802946">
    <property type="pathway name" value="Signaling by moderate kinase activity BRAF mutants"/>
</dbReference>
<dbReference type="Reactome" id="R-HSA-6802948">
    <property type="pathway name" value="Signaling by high-kinase activity BRAF mutants"/>
</dbReference>
<dbReference type="Reactome" id="R-HSA-6802952">
    <property type="pathway name" value="Signaling by BRAF and RAF1 fusions"/>
</dbReference>
<dbReference type="Reactome" id="R-HSA-6802955">
    <property type="pathway name" value="Paradoxical activation of RAF signaling by kinase inactive BRAF"/>
</dbReference>
<dbReference type="Reactome" id="R-HSA-75035">
    <property type="pathway name" value="Chk1/Chk2(Cds1) mediated inactivation of Cyclin B:Cdk1 complex"/>
</dbReference>
<dbReference type="Reactome" id="R-HSA-9614399">
    <property type="pathway name" value="Regulation of localization of FOXO transcription factors"/>
</dbReference>
<dbReference type="Reactome" id="R-HSA-9649948">
    <property type="pathway name" value="Signaling downstream of RAS mutants"/>
</dbReference>
<dbReference type="Reactome" id="R-HSA-9656223">
    <property type="pathway name" value="Signaling by RAF1 mutants"/>
</dbReference>
<dbReference type="Reactome" id="R-HSA-9726840">
    <property type="pathway name" value="SHOC2 M1731 mutant abolishes MRAS complex function"/>
</dbReference>
<dbReference type="Reactome" id="R-HSA-9726842">
    <property type="pathway name" value="Gain-of-function MRAS complexes activate RAF signaling"/>
</dbReference>
<dbReference type="Reactome" id="R-HSA-9735871">
    <property type="pathway name" value="SARS-CoV-1 targets host intracellular signalling and regulatory pathways"/>
</dbReference>
<dbReference type="Reactome" id="R-HSA-9755779">
    <property type="pathway name" value="SARS-CoV-2 targets host intracellular signalling and regulatory pathways"/>
</dbReference>
<dbReference type="Reactome" id="R-HSA-9856649">
    <property type="pathway name" value="Transcriptional and post-translational regulation of MITF-M expression and activity"/>
</dbReference>
<dbReference type="SignaLink" id="P31946"/>
<dbReference type="SIGNOR" id="P31946"/>
<dbReference type="BioGRID-ORCS" id="7529">
    <property type="hits" value="19 hits in 1156 CRISPR screens"/>
</dbReference>
<dbReference type="CD-CODE" id="DEE660B4">
    <property type="entry name" value="Stress granule"/>
</dbReference>
<dbReference type="CD-CODE" id="FB4E32DD">
    <property type="entry name" value="Presynaptic clusters and postsynaptic densities"/>
</dbReference>
<dbReference type="ChiTaRS" id="YWHAB">
    <property type="organism name" value="human"/>
</dbReference>
<dbReference type="EvolutionaryTrace" id="P31946"/>
<dbReference type="GeneWiki" id="YWHAB"/>
<dbReference type="GenomeRNAi" id="7529"/>
<dbReference type="Pharos" id="P31946">
    <property type="development level" value="Tbio"/>
</dbReference>
<dbReference type="PRO" id="PR:P31946"/>
<dbReference type="Proteomes" id="UP000005640">
    <property type="component" value="Chromosome 20"/>
</dbReference>
<dbReference type="RNAct" id="P31946">
    <property type="molecule type" value="protein"/>
</dbReference>
<dbReference type="Bgee" id="ENSG00000166913">
    <property type="expression patterns" value="Expressed in endothelial cell and 214 other cell types or tissues"/>
</dbReference>
<dbReference type="ExpressionAtlas" id="P31946">
    <property type="expression patterns" value="baseline and differential"/>
</dbReference>
<dbReference type="GO" id="GO:0005737">
    <property type="term" value="C:cytoplasm"/>
    <property type="evidence" value="ECO:0000314"/>
    <property type="project" value="UniProtKB"/>
</dbReference>
<dbReference type="GO" id="GO:0005829">
    <property type="term" value="C:cytosol"/>
    <property type="evidence" value="ECO:0000314"/>
    <property type="project" value="HPA"/>
</dbReference>
<dbReference type="GO" id="GO:0070062">
    <property type="term" value="C:extracellular exosome"/>
    <property type="evidence" value="ECO:0007005"/>
    <property type="project" value="UniProtKB"/>
</dbReference>
<dbReference type="GO" id="GO:0005925">
    <property type="term" value="C:focal adhesion"/>
    <property type="evidence" value="ECO:0007005"/>
    <property type="project" value="UniProtKB"/>
</dbReference>
<dbReference type="GO" id="GO:0042470">
    <property type="term" value="C:melanosome"/>
    <property type="evidence" value="ECO:0007669"/>
    <property type="project" value="UniProtKB-SubCell"/>
</dbReference>
<dbReference type="GO" id="GO:0016020">
    <property type="term" value="C:membrane"/>
    <property type="evidence" value="ECO:0007005"/>
    <property type="project" value="UniProtKB"/>
</dbReference>
<dbReference type="GO" id="GO:0005634">
    <property type="term" value="C:nucleus"/>
    <property type="evidence" value="ECO:0000314"/>
    <property type="project" value="FlyBase"/>
</dbReference>
<dbReference type="GO" id="GO:0048471">
    <property type="term" value="C:perinuclear region of cytoplasm"/>
    <property type="evidence" value="ECO:0000314"/>
    <property type="project" value="UniProtKB"/>
</dbReference>
<dbReference type="GO" id="GO:0017053">
    <property type="term" value="C:transcription repressor complex"/>
    <property type="evidence" value="ECO:0007669"/>
    <property type="project" value="Ensembl"/>
</dbReference>
<dbReference type="GO" id="GO:0005774">
    <property type="term" value="C:vacuolar membrane"/>
    <property type="evidence" value="ECO:0007669"/>
    <property type="project" value="UniProtKB-SubCell"/>
</dbReference>
<dbReference type="GO" id="GO:0045296">
    <property type="term" value="F:cadherin binding"/>
    <property type="evidence" value="ECO:0007005"/>
    <property type="project" value="BHF-UCL"/>
</dbReference>
<dbReference type="GO" id="GO:0019899">
    <property type="term" value="F:enzyme binding"/>
    <property type="evidence" value="ECO:0000353"/>
    <property type="project" value="BHF-UCL"/>
</dbReference>
<dbReference type="GO" id="GO:0042826">
    <property type="term" value="F:histone deacetylase binding"/>
    <property type="evidence" value="ECO:0000353"/>
    <property type="project" value="BHF-UCL"/>
</dbReference>
<dbReference type="GO" id="GO:0042802">
    <property type="term" value="F:identical protein binding"/>
    <property type="evidence" value="ECO:0000353"/>
    <property type="project" value="IntAct"/>
</dbReference>
<dbReference type="GO" id="GO:0051219">
    <property type="term" value="F:phosphoprotein binding"/>
    <property type="evidence" value="ECO:0000353"/>
    <property type="project" value="BHF-UCL"/>
</dbReference>
<dbReference type="GO" id="GO:0050815">
    <property type="term" value="F:phosphoserine residue binding"/>
    <property type="evidence" value="ECO:0000353"/>
    <property type="project" value="BHF-UCL"/>
</dbReference>
<dbReference type="GO" id="GO:0019904">
    <property type="term" value="F:protein domain specific binding"/>
    <property type="evidence" value="ECO:0000353"/>
    <property type="project" value="UniProtKB"/>
</dbReference>
<dbReference type="GO" id="GO:0004860">
    <property type="term" value="F:protein kinase inhibitor activity"/>
    <property type="evidence" value="ECO:0000314"/>
    <property type="project" value="UniProtKB"/>
</dbReference>
<dbReference type="GO" id="GO:0004864">
    <property type="term" value="F:protein phosphatase inhibitor activity"/>
    <property type="evidence" value="ECO:0000314"/>
    <property type="project" value="BHF-UCL"/>
</dbReference>
<dbReference type="GO" id="GO:0140311">
    <property type="term" value="F:protein sequestering activity"/>
    <property type="evidence" value="ECO:0000314"/>
    <property type="project" value="BHF-UCL"/>
</dbReference>
<dbReference type="GO" id="GO:0044877">
    <property type="term" value="F:protein-containing complex binding"/>
    <property type="evidence" value="ECO:0007669"/>
    <property type="project" value="Ensembl"/>
</dbReference>
<dbReference type="GO" id="GO:0045892">
    <property type="term" value="P:negative regulation of DNA-templated transcription"/>
    <property type="evidence" value="ECO:0007669"/>
    <property type="project" value="Ensembl"/>
</dbReference>
<dbReference type="GO" id="GO:0045744">
    <property type="term" value="P:negative regulation of G protein-coupled receptor signaling pathway"/>
    <property type="evidence" value="ECO:0000315"/>
    <property type="project" value="UniProtKB"/>
</dbReference>
<dbReference type="GO" id="GO:0042308">
    <property type="term" value="P:negative regulation of protein import into nucleus"/>
    <property type="evidence" value="ECO:0000314"/>
    <property type="project" value="BHF-UCL"/>
</dbReference>
<dbReference type="GO" id="GO:0045944">
    <property type="term" value="P:positive regulation of transcription by RNA polymerase II"/>
    <property type="evidence" value="ECO:0000314"/>
    <property type="project" value="BHF-UCL"/>
</dbReference>
<dbReference type="GO" id="GO:0008104">
    <property type="term" value="P:protein localization"/>
    <property type="evidence" value="ECO:0000318"/>
    <property type="project" value="GO_Central"/>
</dbReference>
<dbReference type="GO" id="GO:0006605">
    <property type="term" value="P:protein targeting"/>
    <property type="evidence" value="ECO:0007669"/>
    <property type="project" value="Ensembl"/>
</dbReference>
<dbReference type="GO" id="GO:0007165">
    <property type="term" value="P:signal transduction"/>
    <property type="evidence" value="ECO:0000318"/>
    <property type="project" value="GO_Central"/>
</dbReference>
<dbReference type="CDD" id="cd10022">
    <property type="entry name" value="14-3-3_beta_zeta"/>
    <property type="match status" value="1"/>
</dbReference>
<dbReference type="FunFam" id="1.20.190.20:FF:000001">
    <property type="entry name" value="14-3-3 gamma 1"/>
    <property type="match status" value="1"/>
</dbReference>
<dbReference type="Gene3D" id="1.20.190.20">
    <property type="entry name" value="14-3-3 domain"/>
    <property type="match status" value="1"/>
</dbReference>
<dbReference type="IDEAL" id="IID00038"/>
<dbReference type="InterPro" id="IPR000308">
    <property type="entry name" value="14-3-3"/>
</dbReference>
<dbReference type="InterPro" id="IPR023409">
    <property type="entry name" value="14-3-3_CS"/>
</dbReference>
<dbReference type="InterPro" id="IPR036815">
    <property type="entry name" value="14-3-3_dom_sf"/>
</dbReference>
<dbReference type="InterPro" id="IPR023410">
    <property type="entry name" value="14-3-3_domain"/>
</dbReference>
<dbReference type="PANTHER" id="PTHR18860">
    <property type="entry name" value="14-3-3 PROTEIN"/>
    <property type="match status" value="1"/>
</dbReference>
<dbReference type="Pfam" id="PF00244">
    <property type="entry name" value="14-3-3"/>
    <property type="match status" value="1"/>
</dbReference>
<dbReference type="PIRSF" id="PIRSF000868">
    <property type="entry name" value="14-3-3"/>
    <property type="match status" value="1"/>
</dbReference>
<dbReference type="PRINTS" id="PR00305">
    <property type="entry name" value="1433ZETA"/>
</dbReference>
<dbReference type="SMART" id="SM00101">
    <property type="entry name" value="14_3_3"/>
    <property type="match status" value="1"/>
</dbReference>
<dbReference type="SUPFAM" id="SSF48445">
    <property type="entry name" value="14-3-3 protein"/>
    <property type="match status" value="1"/>
</dbReference>
<dbReference type="PROSITE" id="PS00796">
    <property type="entry name" value="1433_1"/>
    <property type="match status" value="1"/>
</dbReference>
<dbReference type="PROSITE" id="PS00797">
    <property type="entry name" value="1433_2"/>
    <property type="match status" value="1"/>
</dbReference>
<organism>
    <name type="scientific">Homo sapiens</name>
    <name type="common">Human</name>
    <dbReference type="NCBI Taxonomy" id="9606"/>
    <lineage>
        <taxon>Eukaryota</taxon>
        <taxon>Metazoa</taxon>
        <taxon>Chordata</taxon>
        <taxon>Craniata</taxon>
        <taxon>Vertebrata</taxon>
        <taxon>Euteleostomi</taxon>
        <taxon>Mammalia</taxon>
        <taxon>Eutheria</taxon>
        <taxon>Euarchontoglires</taxon>
        <taxon>Primates</taxon>
        <taxon>Haplorrhini</taxon>
        <taxon>Catarrhini</taxon>
        <taxon>Hominidae</taxon>
        <taxon>Homo</taxon>
    </lineage>
</organism>
<accession>P31946</accession>
<accession>A8K9K2</accession>
<accession>E1P616</accession>